<feature type="chain" id="PRO_1000034341" description="Mannonate dehydratase">
    <location>
        <begin position="1"/>
        <end position="396"/>
    </location>
</feature>
<accession>A1JLS2</accession>
<sequence>MEQTWRWYGPNDPVSLDDVRQAGATGVVTALHHIPNGQVWPVSEIKQRQAEIAAKGLVWSVVESVPIHEEIKTHSGNYDQHIENYQQTLRNLAECGIDIVCYNFMPILDWTRTDLEYQLPDGSKALRFDQIAFAAFELHILKRPGAEKDYTAEEQAQAKAYFDAMTEADIAKLTGNIIAGLPGAEEGYTLDQFRARLAEYDGIDKAQLRENMAYFLRAIIPVAEQVGLRMAVHPDDPPRPILGLPRIVSTIEDMQWLKETVDSIHNGFTMCTGSYGVRADNDLVKMIETFGDRIHFTHLRSTCREGNPKTFHEGGHLQGDVDMYSVVKAILTEEQRRQAAGDMRPIPMRPDHGHQMLDDLHKKTNPGYSAIGRLKGLAEVRGVELALKRTFFPELK</sequence>
<reference key="1">
    <citation type="journal article" date="2006" name="PLoS Genet.">
        <title>The complete genome sequence and comparative genome analysis of the high pathogenicity Yersinia enterocolitica strain 8081.</title>
        <authorList>
            <person name="Thomson N.R."/>
            <person name="Howard S."/>
            <person name="Wren B.W."/>
            <person name="Holden M.T.G."/>
            <person name="Crossman L."/>
            <person name="Challis G.L."/>
            <person name="Churcher C."/>
            <person name="Mungall K."/>
            <person name="Brooks K."/>
            <person name="Chillingworth T."/>
            <person name="Feltwell T."/>
            <person name="Abdellah Z."/>
            <person name="Hauser H."/>
            <person name="Jagels K."/>
            <person name="Maddison M."/>
            <person name="Moule S."/>
            <person name="Sanders M."/>
            <person name="Whitehead S."/>
            <person name="Quail M.A."/>
            <person name="Dougan G."/>
            <person name="Parkhill J."/>
            <person name="Prentice M.B."/>
        </authorList>
    </citation>
    <scope>NUCLEOTIDE SEQUENCE [LARGE SCALE GENOMIC DNA]</scope>
    <source>
        <strain>NCTC 13174 / 8081</strain>
    </source>
</reference>
<dbReference type="EC" id="4.2.1.8" evidence="1"/>
<dbReference type="EMBL" id="AM286415">
    <property type="protein sequence ID" value="CAL11530.1"/>
    <property type="molecule type" value="Genomic_DNA"/>
</dbReference>
<dbReference type="RefSeq" id="WP_005171409.1">
    <property type="nucleotide sequence ID" value="NC_008800.1"/>
</dbReference>
<dbReference type="RefSeq" id="YP_001005748.1">
    <property type="nucleotide sequence ID" value="NC_008800.1"/>
</dbReference>
<dbReference type="SMR" id="A1JLS2"/>
<dbReference type="KEGG" id="yen:YE1440"/>
<dbReference type="PATRIC" id="fig|393305.7.peg.1566"/>
<dbReference type="eggNOG" id="COG1312">
    <property type="taxonomic scope" value="Bacteria"/>
</dbReference>
<dbReference type="HOGENOM" id="CLU_058621_2_0_6"/>
<dbReference type="OrthoDB" id="9780250at2"/>
<dbReference type="UniPathway" id="UPA00246"/>
<dbReference type="Proteomes" id="UP000000642">
    <property type="component" value="Chromosome"/>
</dbReference>
<dbReference type="GO" id="GO:0008198">
    <property type="term" value="F:ferrous iron binding"/>
    <property type="evidence" value="ECO:0007669"/>
    <property type="project" value="TreeGrafter"/>
</dbReference>
<dbReference type="GO" id="GO:0030145">
    <property type="term" value="F:manganese ion binding"/>
    <property type="evidence" value="ECO:0007669"/>
    <property type="project" value="TreeGrafter"/>
</dbReference>
<dbReference type="GO" id="GO:0008927">
    <property type="term" value="F:mannonate dehydratase activity"/>
    <property type="evidence" value="ECO:0007669"/>
    <property type="project" value="UniProtKB-UniRule"/>
</dbReference>
<dbReference type="GO" id="GO:0042840">
    <property type="term" value="P:D-glucuronate catabolic process"/>
    <property type="evidence" value="ECO:0007669"/>
    <property type="project" value="TreeGrafter"/>
</dbReference>
<dbReference type="FunFam" id="3.20.20.150:FF:000010">
    <property type="entry name" value="Mannonate dehydratase"/>
    <property type="match status" value="1"/>
</dbReference>
<dbReference type="Gene3D" id="3.20.20.150">
    <property type="entry name" value="Divalent-metal-dependent TIM barrel enzymes"/>
    <property type="match status" value="1"/>
</dbReference>
<dbReference type="HAMAP" id="MF_00106">
    <property type="entry name" value="UxuA"/>
    <property type="match status" value="1"/>
</dbReference>
<dbReference type="InterPro" id="IPR004628">
    <property type="entry name" value="Man_deHydtase"/>
</dbReference>
<dbReference type="InterPro" id="IPR036237">
    <property type="entry name" value="Xyl_isomerase-like_sf"/>
</dbReference>
<dbReference type="NCBIfam" id="NF003027">
    <property type="entry name" value="PRK03906.1"/>
    <property type="match status" value="1"/>
</dbReference>
<dbReference type="NCBIfam" id="TIGR00695">
    <property type="entry name" value="uxuA"/>
    <property type="match status" value="1"/>
</dbReference>
<dbReference type="PANTHER" id="PTHR30387">
    <property type="entry name" value="MANNONATE DEHYDRATASE"/>
    <property type="match status" value="1"/>
</dbReference>
<dbReference type="PANTHER" id="PTHR30387:SF2">
    <property type="entry name" value="MANNONATE DEHYDRATASE"/>
    <property type="match status" value="1"/>
</dbReference>
<dbReference type="Pfam" id="PF03786">
    <property type="entry name" value="UxuA"/>
    <property type="match status" value="1"/>
</dbReference>
<dbReference type="PIRSF" id="PIRSF016049">
    <property type="entry name" value="Man_dehyd"/>
    <property type="match status" value="1"/>
</dbReference>
<dbReference type="SUPFAM" id="SSF51658">
    <property type="entry name" value="Xylose isomerase-like"/>
    <property type="match status" value="1"/>
</dbReference>
<name>UXUA_YERE8</name>
<organism>
    <name type="scientific">Yersinia enterocolitica serotype O:8 / biotype 1B (strain NCTC 13174 / 8081)</name>
    <dbReference type="NCBI Taxonomy" id="393305"/>
    <lineage>
        <taxon>Bacteria</taxon>
        <taxon>Pseudomonadati</taxon>
        <taxon>Pseudomonadota</taxon>
        <taxon>Gammaproteobacteria</taxon>
        <taxon>Enterobacterales</taxon>
        <taxon>Yersiniaceae</taxon>
        <taxon>Yersinia</taxon>
    </lineage>
</organism>
<gene>
    <name evidence="1" type="primary">uxuA</name>
    <name type="ordered locus">YE1440</name>
</gene>
<protein>
    <recommendedName>
        <fullName evidence="1">Mannonate dehydratase</fullName>
        <ecNumber evidence="1">4.2.1.8</ecNumber>
    </recommendedName>
    <alternativeName>
        <fullName evidence="1">D-mannonate hydro-lyase</fullName>
    </alternativeName>
</protein>
<comment type="function">
    <text evidence="1">Catalyzes the dehydration of D-mannonate.</text>
</comment>
<comment type="catalytic activity">
    <reaction evidence="1">
        <text>D-mannonate = 2-dehydro-3-deoxy-D-gluconate + H2O</text>
        <dbReference type="Rhea" id="RHEA:20097"/>
        <dbReference type="ChEBI" id="CHEBI:15377"/>
        <dbReference type="ChEBI" id="CHEBI:17767"/>
        <dbReference type="ChEBI" id="CHEBI:57990"/>
        <dbReference type="EC" id="4.2.1.8"/>
    </reaction>
</comment>
<comment type="cofactor">
    <cofactor evidence="1">
        <name>Fe(2+)</name>
        <dbReference type="ChEBI" id="CHEBI:29033"/>
    </cofactor>
    <cofactor evidence="1">
        <name>Mn(2+)</name>
        <dbReference type="ChEBI" id="CHEBI:29035"/>
    </cofactor>
</comment>
<comment type="pathway">
    <text evidence="1">Carbohydrate metabolism; pentose and glucuronate interconversion.</text>
</comment>
<comment type="similarity">
    <text evidence="1">Belongs to the mannonate dehydratase family.</text>
</comment>
<keyword id="KW-0408">Iron</keyword>
<keyword id="KW-0456">Lyase</keyword>
<keyword id="KW-0464">Manganese</keyword>
<proteinExistence type="inferred from homology"/>
<evidence type="ECO:0000255" key="1">
    <source>
        <dbReference type="HAMAP-Rule" id="MF_00106"/>
    </source>
</evidence>